<dbReference type="EC" id="1.16.-.-"/>
<dbReference type="EMBL" id="AF319974">
    <property type="protein sequence ID" value="AAG33871.1"/>
    <property type="molecule type" value="Genomic_DNA"/>
</dbReference>
<dbReference type="EMBL" id="AY154459">
    <property type="protein sequence ID" value="AAN47189.1"/>
    <property type="molecule type" value="Genomic_DNA"/>
</dbReference>
<dbReference type="EMBL" id="AJ833004">
    <property type="protein sequence ID" value="CAH55665.1"/>
    <property type="molecule type" value="Genomic_DNA"/>
</dbReference>
<dbReference type="EMBL" id="AJ833005">
    <property type="protein sequence ID" value="CAH55666.1"/>
    <property type="molecule type" value="Genomic_DNA"/>
</dbReference>
<dbReference type="EMBL" id="AJ833006">
    <property type="protein sequence ID" value="CAH55667.1"/>
    <property type="molecule type" value="Genomic_DNA"/>
</dbReference>
<dbReference type="EMBL" id="AJ833007">
    <property type="protein sequence ID" value="CAH55668.1"/>
    <property type="molecule type" value="Genomic_DNA"/>
</dbReference>
<dbReference type="EMBL" id="AJ833008">
    <property type="protein sequence ID" value="CAH55669.1"/>
    <property type="molecule type" value="Genomic_DNA"/>
</dbReference>
<dbReference type="EMBL" id="AJ833009">
    <property type="protein sequence ID" value="CAH55670.1"/>
    <property type="molecule type" value="Genomic_DNA"/>
</dbReference>
<dbReference type="EMBL" id="AJ833010">
    <property type="protein sequence ID" value="CAH55671.1"/>
    <property type="molecule type" value="Genomic_DNA"/>
</dbReference>
<dbReference type="EMBL" id="AJ833011">
    <property type="protein sequence ID" value="CAH55672.1"/>
    <property type="molecule type" value="Genomic_DNA"/>
</dbReference>
<dbReference type="EMBL" id="AJ833013">
    <property type="protein sequence ID" value="CAH55674.1"/>
    <property type="molecule type" value="Genomic_DNA"/>
</dbReference>
<dbReference type="EMBL" id="AJ833014">
    <property type="protein sequence ID" value="CAH55675.1"/>
    <property type="molecule type" value="Genomic_DNA"/>
</dbReference>
<dbReference type="EMBL" id="AJ833015">
    <property type="protein sequence ID" value="CAH55676.1"/>
    <property type="molecule type" value="Genomic_DNA"/>
</dbReference>
<dbReference type="EMBL" id="AJ833016">
    <property type="protein sequence ID" value="CAH55677.1"/>
    <property type="molecule type" value="Genomic_DNA"/>
</dbReference>
<dbReference type="RefSeq" id="WP_004194743.1">
    <property type="nucleotide sequence ID" value="NZ_WIXH01000001.1"/>
</dbReference>
<dbReference type="RefSeq" id="WP_012027605.1">
    <property type="nucleotide sequence ID" value="NZ_WODB01000005.1"/>
</dbReference>
<dbReference type="RefSeq" id="WP_014736235.1">
    <property type="nucleotide sequence ID" value="NZ_RSDQ01000007.1"/>
</dbReference>
<dbReference type="PDB" id="1UMN">
    <property type="method" value="X-ray"/>
    <property type="resolution" value="1.95 A"/>
    <property type="chains" value="A/B/C/D/E/F/G/H/I/J/K/L=8-172"/>
</dbReference>
<dbReference type="PDB" id="2BW1">
    <property type="method" value="X-ray"/>
    <property type="resolution" value="1.81 A"/>
    <property type="chains" value="A/B/C/D/E/F/G/H/I/J/K/L=9-172"/>
</dbReference>
<dbReference type="PDB" id="2CF7">
    <property type="method" value="X-ray"/>
    <property type="resolution" value="1.50 A"/>
    <property type="chains" value="A/B/C/D/E/F/G/H/I/J/K/L=9-172"/>
</dbReference>
<dbReference type="PDB" id="2UX1">
    <property type="method" value="X-ray"/>
    <property type="resolution" value="1.80 A"/>
    <property type="chains" value="A/B/C/D/E/F/G/H/I/J/K/L=9-172"/>
</dbReference>
<dbReference type="PDB" id="2V15">
    <property type="method" value="X-ray"/>
    <property type="resolution" value="2.10 A"/>
    <property type="chains" value="A/B/C/D/E/F/G/H/I/J/K/L=8-172"/>
</dbReference>
<dbReference type="PDB" id="2XJM">
    <property type="method" value="X-ray"/>
    <property type="resolution" value="2.30 A"/>
    <property type="chains" value="A/B/C/D/E/F/G/H/I/J/K/L=8-172"/>
</dbReference>
<dbReference type="PDB" id="2XJN">
    <property type="method" value="X-ray"/>
    <property type="resolution" value="2.10 A"/>
    <property type="chains" value="A/B/C/D/E/F/G/H/I/J/K/L=8-172"/>
</dbReference>
<dbReference type="PDB" id="2XJO">
    <property type="method" value="X-ray"/>
    <property type="resolution" value="2.10 A"/>
    <property type="chains" value="A/B/C/D/E/F/G/H/I/J/K/L=8-172"/>
</dbReference>
<dbReference type="PDB" id="2XKQ">
    <property type="method" value="X-ray"/>
    <property type="resolution" value="2.40 A"/>
    <property type="chains" value="A/B/C/D/E/F/G/H/I/J/K/L=8-172"/>
</dbReference>
<dbReference type="PDBsum" id="1UMN"/>
<dbReference type="PDBsum" id="2BW1"/>
<dbReference type="PDBsum" id="2CF7"/>
<dbReference type="PDBsum" id="2UX1"/>
<dbReference type="PDBsum" id="2V15"/>
<dbReference type="PDBsum" id="2XJM"/>
<dbReference type="PDBsum" id="2XJN"/>
<dbReference type="PDBsum" id="2XJO"/>
<dbReference type="PDBsum" id="2XKQ"/>
<dbReference type="SMR" id="P0CB53"/>
<dbReference type="STRING" id="1321372.GCA_000478745_01199"/>
<dbReference type="PATRIC" id="fig|1307.476.peg.1583"/>
<dbReference type="eggNOG" id="COG0783">
    <property type="taxonomic scope" value="Bacteria"/>
</dbReference>
<dbReference type="OMA" id="WDDYSIG"/>
<dbReference type="OrthoDB" id="9797023at2"/>
<dbReference type="EvolutionaryTrace" id="P0CB53"/>
<dbReference type="GO" id="GO:0005737">
    <property type="term" value="C:cytoplasm"/>
    <property type="evidence" value="ECO:0007669"/>
    <property type="project" value="UniProtKB-SubCell"/>
</dbReference>
<dbReference type="GO" id="GO:0008199">
    <property type="term" value="F:ferric iron binding"/>
    <property type="evidence" value="ECO:0007669"/>
    <property type="project" value="InterPro"/>
</dbReference>
<dbReference type="GO" id="GO:0016491">
    <property type="term" value="F:oxidoreductase activity"/>
    <property type="evidence" value="ECO:0007669"/>
    <property type="project" value="UniProtKB-KW"/>
</dbReference>
<dbReference type="GO" id="GO:0006879">
    <property type="term" value="P:intracellular iron ion homeostasis"/>
    <property type="evidence" value="ECO:0007669"/>
    <property type="project" value="UniProtKB-KW"/>
</dbReference>
<dbReference type="CDD" id="cd01043">
    <property type="entry name" value="DPS"/>
    <property type="match status" value="1"/>
</dbReference>
<dbReference type="Gene3D" id="1.20.1260.10">
    <property type="match status" value="1"/>
</dbReference>
<dbReference type="InterPro" id="IPR002177">
    <property type="entry name" value="DPS_DNA-bd"/>
</dbReference>
<dbReference type="InterPro" id="IPR012347">
    <property type="entry name" value="Ferritin-like"/>
</dbReference>
<dbReference type="InterPro" id="IPR009078">
    <property type="entry name" value="Ferritin-like_SF"/>
</dbReference>
<dbReference type="InterPro" id="IPR008331">
    <property type="entry name" value="Ferritin_DPS_dom"/>
</dbReference>
<dbReference type="PANTHER" id="PTHR42932">
    <property type="entry name" value="GENERAL STRESS PROTEIN 20U"/>
    <property type="match status" value="1"/>
</dbReference>
<dbReference type="PANTHER" id="PTHR42932:SF1">
    <property type="entry name" value="GENERAL STRESS PROTEIN 20U"/>
    <property type="match status" value="1"/>
</dbReference>
<dbReference type="Pfam" id="PF00210">
    <property type="entry name" value="Ferritin"/>
    <property type="match status" value="1"/>
</dbReference>
<dbReference type="PIRSF" id="PIRSF005900">
    <property type="entry name" value="Dps"/>
    <property type="match status" value="1"/>
</dbReference>
<dbReference type="PRINTS" id="PR01346">
    <property type="entry name" value="HELNAPAPROT"/>
</dbReference>
<dbReference type="SUPFAM" id="SSF47240">
    <property type="entry name" value="Ferritin-like"/>
    <property type="match status" value="1"/>
</dbReference>
<accession>P0CB53</accession>
<accession>Q4A3W3</accession>
<accession>Q4A3W4</accession>
<accession>Q4A3W5</accession>
<accession>Q4A3W6</accession>
<accession>Q4A3W7</accession>
<accession>Q4A3W8</accession>
<accession>Q4A3W9</accession>
<accession>Q4A3X0</accession>
<accession>Q9F5J9</accession>
<organism>
    <name type="scientific">Streptococcus suis</name>
    <dbReference type="NCBI Taxonomy" id="1307"/>
    <lineage>
        <taxon>Bacteria</taxon>
        <taxon>Bacillati</taxon>
        <taxon>Bacillota</taxon>
        <taxon>Bacilli</taxon>
        <taxon>Lactobacillales</taxon>
        <taxon>Streptococcaceae</taxon>
        <taxon>Streptococcus</taxon>
    </lineage>
</organism>
<keyword id="KW-0002">3D-structure</keyword>
<keyword id="KW-0963">Cytoplasm</keyword>
<keyword id="KW-0408">Iron</keyword>
<keyword id="KW-0409">Iron storage</keyword>
<keyword id="KW-0479">Metal-binding</keyword>
<keyword id="KW-0560">Oxidoreductase</keyword>
<name>DPS_STRSU</name>
<proteinExistence type="evidence at protein level"/>
<evidence type="ECO:0000250" key="1"/>
<evidence type="ECO:0000269" key="2">
    <source>
    </source>
</evidence>
<evidence type="ECO:0000269" key="3">
    <source>
    </source>
</evidence>
<evidence type="ECO:0000305" key="4"/>
<evidence type="ECO:0007829" key="5">
    <source>
        <dbReference type="PDB" id="2CF7"/>
    </source>
</evidence>
<reference key="1">
    <citation type="journal article" date="2001" name="Can. J. Microbiol.">
        <title>Iron content of Streptococcus suis and evidence for a dpr homologue.</title>
        <authorList>
            <person name="Niven D.F."/>
            <person name="Ekins A."/>
        </authorList>
    </citation>
    <scope>NUCLEOTIDE SEQUENCE [GENOMIC DNA]</scope>
    <source>
        <strain>ATCC 43765</strain>
    </source>
</reference>
<reference key="2">
    <citation type="journal article" date="2003" name="J. Biol. Chem.">
        <title>Molecular basis of H2O2 resistance mediated by Streptococcal Dpr. Demonstration of the functional involvement of the putative ferroxidase center by site-directed mutagenesis in Streptococcus suis.</title>
        <authorList>
            <person name="Pulliainen A.T."/>
            <person name="Haataja S."/>
            <person name="Kaehkoenen S."/>
            <person name="Finne J."/>
        </authorList>
    </citation>
    <scope>NUCLEOTIDE SEQUENCE [GENOMIC DNA]</scope>
    <scope>MUTAGENESIS OF ASP-74 AND GLU-78</scope>
    <source>
        <strain>628</strain>
        <strain>D282</strain>
    </source>
</reference>
<reference key="3">
    <citation type="journal article" date="2005" name="Mol. Microbiol.">
        <title>Dps/Dpr ferritin-like protein: insights into the mechanism of iron incorporation and evidence for a central role in cellular iron homeostasisin Streptococcus suis.</title>
        <authorList>
            <person name="Pulliainen A.T."/>
            <person name="Kauko A."/>
            <person name="Haataja S."/>
            <person name="Papageorgiou A.C."/>
            <person name="Finne J."/>
        </authorList>
    </citation>
    <scope>NUCLEOTIDE SEQUENCE [GENOMIC DNA]</scope>
    <scope>MUTAGENESIS OF HIS-47; HIS-59; ASP-63; ASP-74; GLU-78; ASP-137 AND ASP-146</scope>
    <source>
        <strain>12/P32</strain>
        <strain>6407</strain>
        <strain>825</strain>
        <strain>836</strain>
        <strain>849</strain>
        <strain>854</strain>
        <strain>BA 70/12</strain>
        <strain>D282</strain>
        <strain>KU5</strain>
        <strain>P805</strain>
        <strain>R75/L1</strain>
        <strain>TEW/2</strain>
    </source>
</reference>
<reference key="4">
    <citation type="journal article" date="2004" name="J. Mol. Biol.">
        <title>Crystal structure of Streptococcus suis Dps-like peroxide resistance protein Dpr: implications for iron incorporation.</title>
        <authorList>
            <person name="Kauko A."/>
            <person name="Haataja S."/>
            <person name="Pulliainen A.T."/>
            <person name="Finne J."/>
            <person name="Papageorgiou A.C."/>
        </authorList>
    </citation>
    <scope>X-RAY CRYSTALLOGRAPHY (1.95 ANGSTROMS) OF 8-172</scope>
    <scope>SUBUNIT</scope>
</reference>
<protein>
    <recommendedName>
        <fullName>DNA protection during starvation protein</fullName>
        <ecNumber>1.16.-.-</ecNumber>
    </recommendedName>
</protein>
<gene>
    <name type="primary">dps</name>
    <name type="synonym">dpr</name>
</gene>
<sequence>MMKQKYYQSPAEIASFSPRPSLADSKAVLNQAVADLSVAHSILHQVHWYMRGRGFMIWHPKMDEYMEEIDGYLDEMSERLITLGGAPFSTLKEFSENSQLKEVLGDYNVTIEEQLARVVEVFRYLAALFQKGFDVSDEEGDSVTNDIFNVAKASIEKHIWMLQAELGQAPKL</sequence>
<comment type="function">
    <text evidence="1">Protects DNA from oxidative damage by sequestering intracellular Fe(2+) ion and storing it in the form of Fe(3+) oxyhydroxide mineral. One hydrogen peroxide oxidizes two Fe(2+) ions, which prevents hydroxyl radical production by the Fenton reaction (By similarity). It binds and incorporates Fe(2+) iron. Is responsible for hydrogen peroxide resistance. Does not bind DNA.</text>
</comment>
<comment type="catalytic activity">
    <reaction>
        <text>2 Fe(2+) + H2O2 + 2 H(+) = 2 Fe(3+) + 2 H2O</text>
        <dbReference type="Rhea" id="RHEA:48712"/>
        <dbReference type="ChEBI" id="CHEBI:15377"/>
        <dbReference type="ChEBI" id="CHEBI:15378"/>
        <dbReference type="ChEBI" id="CHEBI:16240"/>
        <dbReference type="ChEBI" id="CHEBI:29033"/>
        <dbReference type="ChEBI" id="CHEBI:29034"/>
    </reaction>
</comment>
<comment type="subunit">
    <text evidence="1">Homododecamer. The 12 subunits form a hollow sphere into which the mineral iron core can probably be deposited. Can store up to 480 Fe(3+) (By similarity).</text>
</comment>
<comment type="subcellular location">
    <subcellularLocation>
        <location evidence="1">Cytoplasm</location>
    </subcellularLocation>
</comment>
<comment type="domain">
    <text>12 di-nuclear ferroxidase centers are located at the interfaces between subunits related by 2-fold symmetry axes.</text>
</comment>
<comment type="similarity">
    <text evidence="4">Belongs to the Dps family.</text>
</comment>
<feature type="chain" id="PRO_0000253337" description="DNA protection during starvation protein">
    <location>
        <begin position="1"/>
        <end position="172"/>
    </location>
</feature>
<feature type="binding site" evidence="1">
    <location>
        <position position="47"/>
    </location>
    <ligand>
        <name>Fe cation</name>
        <dbReference type="ChEBI" id="CHEBI:24875"/>
        <label>1</label>
        <note>ligand shared between two dodecameric partners</note>
    </ligand>
</feature>
<feature type="binding site" description="in other chain" evidence="1">
    <location>
        <position position="74"/>
    </location>
    <ligand>
        <name>Fe cation</name>
        <dbReference type="ChEBI" id="CHEBI:24875"/>
        <label>1</label>
        <note>ligand shared between two dodecameric partners</note>
    </ligand>
</feature>
<feature type="binding site" description="in other chain" evidence="1">
    <location>
        <position position="78"/>
    </location>
    <ligand>
        <name>Fe cation</name>
        <dbReference type="ChEBI" id="CHEBI:24875"/>
        <label>1</label>
        <note>ligand shared between two dodecameric partners</note>
    </ligand>
</feature>
<feature type="binding site" evidence="1">
    <location>
        <position position="78"/>
    </location>
    <ligand>
        <name>Fe cation</name>
        <dbReference type="ChEBI" id="CHEBI:24875"/>
        <label>2</label>
    </ligand>
</feature>
<feature type="sequence variant" description="In strain: 825.">
    <original>A</original>
    <variation>S</variation>
    <location>
        <position position="27"/>
    </location>
</feature>
<feature type="sequence variant" description="In strain: 849.">
    <original>I</original>
    <variation>L</variation>
    <location>
        <position position="42"/>
    </location>
</feature>
<feature type="sequence variant" description="In strain: 854.">
    <original>L</original>
    <variation>F</variation>
    <location>
        <position position="91"/>
    </location>
</feature>
<feature type="sequence variant" description="In strain: KU5.">
    <original>V</original>
    <variation>A</variation>
    <location>
        <position position="103"/>
    </location>
</feature>
<feature type="sequence variant" description="In strain: 6407, 825, 849, BA 70/12 and KU5.">
    <original>L</original>
    <variation>P</variation>
    <location>
        <position position="104"/>
    </location>
</feature>
<feature type="sequence variant" description="In strain: 6407 and 825.">
    <original>T</original>
    <variation>M</variation>
    <location>
        <position position="110"/>
    </location>
</feature>
<feature type="sequence variant" description="In strain: 849 and BA 70/12.">
    <original>A</original>
    <variation>V</variation>
    <location>
        <position position="116"/>
    </location>
</feature>
<feature type="sequence variant" description="In strain: 836.">
    <original>S</original>
    <variation>N</variation>
    <location>
        <position position="154"/>
    </location>
</feature>
<feature type="sequence variant" description="In strain: KU5.">
    <original>K</original>
    <variation>G</variation>
    <location>
        <position position="171"/>
    </location>
</feature>
<feature type="mutagenesis site" description="Decreases the iron incorporation considerably." evidence="3">
    <original>H</original>
    <variation>A</variation>
    <location>
        <position position="47"/>
    </location>
</feature>
<feature type="mutagenesis site" description="Decreases the iron incorporation considerably and induces Fe(2+) oxidation-dependent degradation." evidence="3">
    <original>H</original>
    <variation>A</variation>
    <location>
        <position position="59"/>
    </location>
</feature>
<feature type="mutagenesis site" description="Decreases the iron incorporation but is still capable of binding iron to some extent." evidence="3">
    <original>D</original>
    <variation>A</variation>
    <location>
        <position position="63"/>
    </location>
</feature>
<feature type="mutagenesis site" description="Abolishes the iron incorporation." evidence="2 3">
    <original>D</original>
    <variation>A</variation>
    <location>
        <position position="74"/>
    </location>
</feature>
<feature type="mutagenesis site" description="Abolishes the iron incorporation." evidence="2 3">
    <original>E</original>
    <variation>A</variation>
    <location>
        <position position="78"/>
    </location>
</feature>
<feature type="mutagenesis site" description="Decreases the iron incorporation considerably." evidence="2 3">
    <original>E</original>
    <variation>D</variation>
    <location>
        <position position="78"/>
    </location>
</feature>
<feature type="mutagenesis site" description="No major effects." evidence="3">
    <original>D</original>
    <variation>A</variation>
    <variation>F</variation>
    <location>
        <position position="137"/>
    </location>
</feature>
<feature type="mutagenesis site" description="No major effects." evidence="3">
    <original>D</original>
    <variation>A</variation>
    <location>
        <position position="146"/>
    </location>
</feature>
<feature type="mutagenesis site" description="Decreases the iron incorporation considerably." evidence="3">
    <original>D</original>
    <variation>F</variation>
    <location>
        <position position="146"/>
    </location>
</feature>
<feature type="helix" evidence="5">
    <location>
        <begin position="25"/>
        <end position="49"/>
    </location>
</feature>
<feature type="helix" evidence="5">
    <location>
        <begin position="55"/>
        <end position="82"/>
    </location>
</feature>
<feature type="helix" evidence="5">
    <location>
        <begin position="91"/>
        <end position="97"/>
    </location>
</feature>
<feature type="helix" evidence="5">
    <location>
        <begin position="111"/>
        <end position="139"/>
    </location>
</feature>
<feature type="helix" evidence="5">
    <location>
        <begin position="142"/>
        <end position="165"/>
    </location>
</feature>